<dbReference type="EMBL" id="AY039202">
    <property type="protein sequence ID" value="AAK83450.1"/>
    <property type="molecule type" value="mRNA"/>
</dbReference>
<dbReference type="SMR" id="Q962B2"/>
<dbReference type="GO" id="GO:0005737">
    <property type="term" value="C:cytoplasm"/>
    <property type="evidence" value="ECO:0007669"/>
    <property type="project" value="InterPro"/>
</dbReference>
<dbReference type="GO" id="GO:0008061">
    <property type="term" value="F:chitin binding"/>
    <property type="evidence" value="ECO:0007669"/>
    <property type="project" value="UniProtKB-KW"/>
</dbReference>
<dbReference type="GO" id="GO:0042742">
    <property type="term" value="P:defense response to bacterium"/>
    <property type="evidence" value="ECO:0007669"/>
    <property type="project" value="UniProtKB-KW"/>
</dbReference>
<dbReference type="GO" id="GO:0050832">
    <property type="term" value="P:defense response to fungus"/>
    <property type="evidence" value="ECO:0007669"/>
    <property type="project" value="UniProtKB-KW"/>
</dbReference>
<dbReference type="GO" id="GO:0031640">
    <property type="term" value="P:killing of cells of another organism"/>
    <property type="evidence" value="ECO:0007669"/>
    <property type="project" value="UniProtKB-KW"/>
</dbReference>
<dbReference type="InterPro" id="IPR009226">
    <property type="entry name" value="Penaeidin"/>
</dbReference>
<dbReference type="Pfam" id="PF05927">
    <property type="entry name" value="Penaeidin"/>
    <property type="match status" value="1"/>
</dbReference>
<comment type="function">
    <text evidence="1">Antibacterial and antifungal activity. Presents chitin-binding activity (By similarity).</text>
</comment>
<comment type="subcellular location">
    <subcellularLocation>
        <location>Cytoplasmic granule</location>
    </subcellularLocation>
    <text>Cytoplasmic granules of hemocytes and to a lesser extent in small granules of hemocytes.</text>
</comment>
<comment type="similarity">
    <text evidence="3">Belongs to the penaeidin family.</text>
</comment>
<evidence type="ECO:0000250" key="1"/>
<evidence type="ECO:0000255" key="2"/>
<evidence type="ECO:0000305" key="3"/>
<proteinExistence type="inferred from homology"/>
<accession>Q962B2</accession>
<name>PEN3K_PENST</name>
<protein>
    <recommendedName>
        <fullName>Penaeidin-3k</fullName>
        <shortName>Pen-3k</shortName>
    </recommendedName>
</protein>
<feature type="signal peptide" evidence="2">
    <location>
        <begin position="1"/>
        <end position="19"/>
    </location>
</feature>
<feature type="chain" id="PRO_0000023516" description="Penaeidin-3k">
    <location>
        <begin position="20"/>
        <end position="74"/>
    </location>
</feature>
<feature type="modified residue" description="Pyrrolidone carboxylic acid" evidence="1">
    <location>
        <position position="20"/>
    </location>
</feature>
<feature type="modified residue" description="Serine amide" evidence="1">
    <location>
        <position position="74"/>
    </location>
</feature>
<feature type="disulfide bond" evidence="1">
    <location>
        <begin position="44"/>
        <end position="59"/>
    </location>
</feature>
<feature type="disulfide bond" evidence="1">
    <location>
        <begin position="48"/>
        <end position="66"/>
    </location>
</feature>
<feature type="disulfide bond" evidence="1">
    <location>
        <begin position="60"/>
        <end position="67"/>
    </location>
</feature>
<organism>
    <name type="scientific">Penaeus setiferus</name>
    <name type="common">Atlantic white shrimp</name>
    <name type="synonym">Litopenaeus setiferus</name>
    <dbReference type="NCBI Taxonomy" id="64468"/>
    <lineage>
        <taxon>Eukaryota</taxon>
        <taxon>Metazoa</taxon>
        <taxon>Ecdysozoa</taxon>
        <taxon>Arthropoda</taxon>
        <taxon>Crustacea</taxon>
        <taxon>Multicrustacea</taxon>
        <taxon>Malacostraca</taxon>
        <taxon>Eumalacostraca</taxon>
        <taxon>Eucarida</taxon>
        <taxon>Decapoda</taxon>
        <taxon>Dendrobranchiata</taxon>
        <taxon>Penaeoidea</taxon>
        <taxon>Penaeidae</taxon>
        <taxon>Penaeus</taxon>
    </lineage>
</organism>
<sequence length="75" mass="8223">MRLVVCLVFLASFALVCQGQGYKGPYTRPILRPYVRPVVSYNACTLSCRGITTTQARSCCTRLGRCCHVAKGYSG</sequence>
<keyword id="KW-0027">Amidation</keyword>
<keyword id="KW-0044">Antibiotic</keyword>
<keyword id="KW-0929">Antimicrobial</keyword>
<keyword id="KW-0147">Chitin-binding</keyword>
<keyword id="KW-1015">Disulfide bond</keyword>
<keyword id="KW-0295">Fungicide</keyword>
<keyword id="KW-0873">Pyrrolidone carboxylic acid</keyword>
<keyword id="KW-0732">Signal</keyword>
<reference key="1">
    <citation type="journal article" date="2002" name="Immunogenetics">
        <title>Diversity of the penaeidin antimicrobial peptides in two shrimp species.</title>
        <authorList>
            <person name="Cuthbertson B.J."/>
            <person name="Shepard E.F."/>
            <person name="Chapman R.W."/>
            <person name="Gross P.S."/>
        </authorList>
    </citation>
    <scope>NUCLEOTIDE SEQUENCE [MRNA]</scope>
    <source>
        <tissue>Hemocyte</tissue>
    </source>
</reference>